<proteinExistence type="evidence at protein level"/>
<dbReference type="EMBL" id="D10663">
    <property type="status" value="NOT_ANNOTATED_CDS"/>
    <property type="molecule type" value="Genomic_RNA"/>
</dbReference>
<dbReference type="EMBL" id="AJ320274">
    <property type="protein sequence ID" value="CAC86465.1"/>
    <property type="molecule type" value="Genomic_RNA"/>
</dbReference>
<dbReference type="RefSeq" id="NP_620826.1">
    <property type="nucleotide sequence ID" value="NC_003838.1"/>
</dbReference>
<dbReference type="PDB" id="2ZI0">
    <property type="method" value="X-ray"/>
    <property type="resolution" value="2.82 A"/>
    <property type="chains" value="A/B=1-69"/>
</dbReference>
<dbReference type="PDB" id="3CZ3">
    <property type="method" value="X-ray"/>
    <property type="resolution" value="3.23 A"/>
    <property type="chains" value="A/B/C/D=1-69"/>
</dbReference>
<dbReference type="PDBsum" id="2ZI0"/>
<dbReference type="PDBsum" id="3CZ3"/>
<dbReference type="SMR" id="Q8UYT3"/>
<dbReference type="KEGG" id="vg:962654"/>
<dbReference type="EvolutionaryTrace" id="Q8UYT3"/>
<dbReference type="Proteomes" id="UP000007399">
    <property type="component" value="Genome"/>
</dbReference>
<dbReference type="GO" id="GO:0042025">
    <property type="term" value="C:host cell nucleus"/>
    <property type="evidence" value="ECO:0007669"/>
    <property type="project" value="UniProtKB-SubCell"/>
</dbReference>
<dbReference type="GO" id="GO:0003723">
    <property type="term" value="F:RNA binding"/>
    <property type="evidence" value="ECO:0007669"/>
    <property type="project" value="UniProtKB-KW"/>
</dbReference>
<dbReference type="GO" id="GO:0052170">
    <property type="term" value="P:symbiont-mediated suppression of host innate immune response"/>
    <property type="evidence" value="ECO:0007669"/>
    <property type="project" value="UniProtKB-KW"/>
</dbReference>
<dbReference type="Gene3D" id="1.20.5.3800">
    <property type="match status" value="1"/>
</dbReference>
<dbReference type="InterPro" id="IPR004946">
    <property type="entry name" value="Cucumo_2B"/>
</dbReference>
<dbReference type="Pfam" id="PF03263">
    <property type="entry name" value="Cucumo_2B"/>
    <property type="match status" value="1"/>
</dbReference>
<protein>
    <recommendedName>
        <fullName>Suppressor of silencing 2b</fullName>
    </recommendedName>
    <alternativeName>
        <fullName>Protein 2b</fullName>
    </alternativeName>
</protein>
<gene>
    <name type="ORF">ORF2b</name>
</gene>
<keyword id="KW-0002">3D-structure</keyword>
<keyword id="KW-0175">Coiled coil</keyword>
<keyword id="KW-1048">Host nucleus</keyword>
<keyword id="KW-0945">Host-virus interaction</keyword>
<keyword id="KW-1090">Inhibition of host innate immune response by virus</keyword>
<keyword id="KW-1185">Reference proteome</keyword>
<keyword id="KW-0694">RNA-binding</keyword>
<keyword id="KW-0941">Suppressor of RNA silencing</keyword>
<keyword id="KW-0899">Viral immunoevasion</keyword>
<organismHost>
    <name type="scientific">Canna</name>
    <dbReference type="NCBI Taxonomy" id="4627"/>
</organismHost>
<organismHost>
    <name type="scientific">Chrysanthemum morifolium</name>
    <name type="common">Florist's daisy</name>
    <name type="synonym">Dendranthema grandiflorum</name>
    <dbReference type="NCBI Taxonomy" id="41568"/>
</organismHost>
<organismHost>
    <name type="scientific">Lilium</name>
    <dbReference type="NCBI Taxonomy" id="4688"/>
</organismHost>
<organismHost>
    <name type="scientific">Solanum lycopersicum</name>
    <name type="common">Tomato</name>
    <name type="synonym">Lycopersicon esculentum</name>
    <dbReference type="NCBI Taxonomy" id="4081"/>
</organismHost>
<comment type="function">
    <text evidence="4 6 7">Acts as a suppressor of RNA-mediated gene silencing, also known as post-transcriptional gene silencing (PTGS), a mechanism of plant viral defense that limits the accumulation of viral RNAs. Forms a homodimer to measure siRNA duplex in a length-preference mode. Binds to both siRNA duplexes (19bp) and long siRNA duplexes (30bp).</text>
</comment>
<comment type="subunit">
    <text evidence="5">Homodimer. Homotetramer (dimer of dimers).</text>
</comment>
<comment type="subcellular location">
    <subcellularLocation>
        <location evidence="1">Host nucleus</location>
    </subcellularLocation>
</comment>
<comment type="similarity">
    <text evidence="8">Belongs to the cucumovirus/ilarvirus protein 2b family.</text>
</comment>
<feature type="chain" id="PRO_0000312150" description="Suppressor of silencing 2b">
    <location>
        <begin position="1"/>
        <end position="95"/>
    </location>
</feature>
<feature type="region of interest" description="Homotetramerization">
    <location>
        <begin position="8"/>
        <end position="18"/>
    </location>
</feature>
<feature type="region of interest" description="Disordered" evidence="3">
    <location>
        <begin position="16"/>
        <end position="49"/>
    </location>
</feature>
<feature type="coiled-coil region" evidence="2">
    <location>
        <begin position="8"/>
        <end position="40"/>
    </location>
</feature>
<feature type="short sequence motif" description="Nuclear localization signal" evidence="1">
    <location>
        <begin position="26"/>
        <end position="30"/>
    </location>
</feature>
<feature type="compositionally biased region" description="Basic residues" evidence="3">
    <location>
        <begin position="23"/>
        <end position="37"/>
    </location>
</feature>
<feature type="compositionally biased region" description="Basic and acidic residues" evidence="3">
    <location>
        <begin position="38"/>
        <end position="49"/>
    </location>
</feature>
<feature type="helix" evidence="9">
    <location>
        <begin position="8"/>
        <end position="35"/>
    </location>
</feature>
<feature type="helix" evidence="9">
    <location>
        <begin position="41"/>
        <end position="61"/>
    </location>
</feature>
<accession>Q8UYT3</accession>
<organism>
    <name type="scientific">Tomato aspermy virus</name>
    <name type="common">TAV</name>
    <dbReference type="NCBI Taxonomy" id="12315"/>
    <lineage>
        <taxon>Viruses</taxon>
        <taxon>Riboviria</taxon>
        <taxon>Orthornavirae</taxon>
        <taxon>Kitrinoviricota</taxon>
        <taxon>Alsuviricetes</taxon>
        <taxon>Martellivirales</taxon>
        <taxon>Bromoviridae</taxon>
        <taxon>Cucumovirus</taxon>
    </lineage>
</organism>
<reference key="1">
    <citation type="journal article" date="1991" name="J. Gen. Virol.">
        <title>Nucleotide sequence of tomato aspermy virus RNA 2.</title>
        <authorList>
            <person name="Moriones E."/>
            <person name="Roossinck M.J."/>
            <person name="Garcia-Arenal F."/>
        </authorList>
    </citation>
    <scope>NUCLEOTIDE SEQUENCE [GENOMIC RNA]</scope>
</reference>
<reference key="2">
    <citation type="journal article" date="2002" name="Mol. Cells">
        <title>Generation of infectious cDNA clones of a Korean strain of tomato aspermy virus.</title>
        <authorList>
            <person name="Choi S.K."/>
            <person name="Choi J.K."/>
            <person name="Ryu K.H."/>
            <person name="Park W.M."/>
        </authorList>
    </citation>
    <scope>NUCLEOTIDE SEQUENCE [GENOMIC RNA]</scope>
    <source>
        <strain>KC-TAV</strain>
    </source>
</reference>
<reference key="3">
    <citation type="journal article" date="1994" name="Virology">
        <title>New overlapping gene encoded by the cucumber mosaic virus genome.</title>
        <authorList>
            <person name="Ding S.W."/>
            <person name="Anderson B.J."/>
            <person name="Haase H.R."/>
            <person name="Symons R.H."/>
        </authorList>
    </citation>
    <scope>FUNCTION</scope>
</reference>
<reference key="4">
    <citation type="journal article" date="1997" name="J. Gen. Virol.">
        <title>In vivo expression of an overlapping gene encoded by the cucumoviruses.</title>
        <authorList>
            <person name="Shi B.J."/>
            <person name="Ding S.W."/>
            <person name="Symons R.H."/>
        </authorList>
    </citation>
    <scope>FUNCTION</scope>
</reference>
<reference key="5">
    <citation type="journal article" date="1999" name="EMBO J.">
        <title>Strong host resistance targeted against a viral suppressor of the plant gene silencing defence mechanism.</title>
        <authorList>
            <person name="Li H.-W."/>
            <person name="Lucy A.P."/>
            <person name="Guo H.-S."/>
            <person name="Li W.-X."/>
            <person name="Ji L.-H."/>
            <person name="Wong S.-M."/>
            <person name="Ding S.-W."/>
        </authorList>
    </citation>
    <scope>FUNCTION</scope>
</reference>
<reference key="6">
    <citation type="journal article" date="2008" name="EMBO Rep.">
        <title>Structural basis for RNA-silencing suppression by Tomato aspermy virus protein 2b.</title>
        <authorList>
            <person name="Chen H.Y."/>
            <person name="Yang J."/>
            <person name="Lin C."/>
            <person name="Yuan Y.A."/>
        </authorList>
    </citation>
    <scope>X-RAY CRYSTALLOGRAPHY (2.82 ANGSTROMS) OF 1-69 IN COMPLEX WITH A SMALL INTERFERING RNA DUPLEX</scope>
    <scope>SUBUNIT</scope>
</reference>
<sequence length="95" mass="11165">MASIEIPLHEIIRKLERMNQKKQAQRKRHKLNRKERGHKSPSEQRRSELWHARQVELSAINSDNSSDEGTTLCRFDTFGSKSDAICDRSDWCLDQ</sequence>
<name>2B_TAV</name>
<evidence type="ECO:0000250" key="1"/>
<evidence type="ECO:0000255" key="2"/>
<evidence type="ECO:0000256" key="3">
    <source>
        <dbReference type="SAM" id="MobiDB-lite"/>
    </source>
</evidence>
<evidence type="ECO:0000269" key="4">
    <source>
    </source>
</evidence>
<evidence type="ECO:0000269" key="5">
    <source>
    </source>
</evidence>
<evidence type="ECO:0000269" key="6">
    <source>
    </source>
</evidence>
<evidence type="ECO:0000269" key="7">
    <source>
    </source>
</evidence>
<evidence type="ECO:0000305" key="8"/>
<evidence type="ECO:0007829" key="9">
    <source>
        <dbReference type="PDB" id="2ZI0"/>
    </source>
</evidence>